<gene>
    <name evidence="1" type="primary">pqqA</name>
    <name type="ordered locus">BceJ2315_58020</name>
    <name type="ORF">BCAM2364</name>
</gene>
<evidence type="ECO:0000255" key="1">
    <source>
        <dbReference type="HAMAP-Rule" id="MF_00656"/>
    </source>
</evidence>
<sequence>MQWTTPSYTDLRFGFEITMYIANR</sequence>
<feature type="chain" id="PRO_1000131196" description="Coenzyme PQQ synthesis protein A">
    <location>
        <begin position="1"/>
        <end position="24"/>
    </location>
</feature>
<feature type="cross-link" description="Pyrroloquinoline quinone (Glu-Tyr)" evidence="1">
    <location>
        <begin position="16"/>
        <end position="20"/>
    </location>
</feature>
<reference key="1">
    <citation type="journal article" date="2009" name="J. Bacteriol.">
        <title>The genome of Burkholderia cenocepacia J2315, an epidemic pathogen of cystic fibrosis patients.</title>
        <authorList>
            <person name="Holden M.T."/>
            <person name="Seth-Smith H.M."/>
            <person name="Crossman L.C."/>
            <person name="Sebaihia M."/>
            <person name="Bentley S.D."/>
            <person name="Cerdeno-Tarraga A.M."/>
            <person name="Thomson N.R."/>
            <person name="Bason N."/>
            <person name="Quail M.A."/>
            <person name="Sharp S."/>
            <person name="Cherevach I."/>
            <person name="Churcher C."/>
            <person name="Goodhead I."/>
            <person name="Hauser H."/>
            <person name="Holroyd N."/>
            <person name="Mungall K."/>
            <person name="Scott P."/>
            <person name="Walker D."/>
            <person name="White B."/>
            <person name="Rose H."/>
            <person name="Iversen P."/>
            <person name="Mil-Homens D."/>
            <person name="Rocha E.P."/>
            <person name="Fialho A.M."/>
            <person name="Baldwin A."/>
            <person name="Dowson C."/>
            <person name="Barrell B.G."/>
            <person name="Govan J.R."/>
            <person name="Vandamme P."/>
            <person name="Hart C.A."/>
            <person name="Mahenthiralingam E."/>
            <person name="Parkhill J."/>
        </authorList>
    </citation>
    <scope>NUCLEOTIDE SEQUENCE [LARGE SCALE GENOMIC DNA]</scope>
    <source>
        <strain>ATCC BAA-245 / DSM 16553 / LMG 16656 / NCTC 13227 / J2315 / CF5610</strain>
    </source>
</reference>
<protein>
    <recommendedName>
        <fullName evidence="1">Coenzyme PQQ synthesis protein A</fullName>
    </recommendedName>
    <alternativeName>
        <fullName evidence="1">Pyrroloquinoline quinone biosynthesis protein A</fullName>
    </alternativeName>
</protein>
<dbReference type="EMBL" id="AM747721">
    <property type="protein sequence ID" value="CAR56225.1"/>
    <property type="molecule type" value="Genomic_DNA"/>
</dbReference>
<dbReference type="RefSeq" id="WP_006485436.1">
    <property type="nucleotide sequence ID" value="NC_011001.1"/>
</dbReference>
<dbReference type="GeneID" id="93188204"/>
<dbReference type="KEGG" id="bcj:BCAM2364"/>
<dbReference type="eggNOG" id="ENOG50317GN">
    <property type="taxonomic scope" value="Bacteria"/>
</dbReference>
<dbReference type="HOGENOM" id="CLU_219131_0_0_4"/>
<dbReference type="BioCyc" id="BCEN216591:G1G1V-6448-MONOMER"/>
<dbReference type="UniPathway" id="UPA00539"/>
<dbReference type="Proteomes" id="UP000001035">
    <property type="component" value="Chromosome 2"/>
</dbReference>
<dbReference type="GO" id="GO:0018189">
    <property type="term" value="P:pyrroloquinoline quinone biosynthetic process"/>
    <property type="evidence" value="ECO:0007669"/>
    <property type="project" value="UniProtKB-UniRule"/>
</dbReference>
<dbReference type="HAMAP" id="MF_00656">
    <property type="entry name" value="PQQ_syn_PqqA"/>
    <property type="match status" value="1"/>
</dbReference>
<dbReference type="InterPro" id="IPR011725">
    <property type="entry name" value="PQQ_synth_PqqA"/>
</dbReference>
<dbReference type="NCBIfam" id="TIGR02107">
    <property type="entry name" value="PQQ_syn_pqqA"/>
    <property type="match status" value="1"/>
</dbReference>
<dbReference type="Pfam" id="PF08042">
    <property type="entry name" value="PqqA"/>
    <property type="match status" value="1"/>
</dbReference>
<keyword id="KW-0884">PQQ biosynthesis</keyword>
<accession>B4EHL5</accession>
<organism>
    <name type="scientific">Burkholderia cenocepacia (strain ATCC BAA-245 / DSM 16553 / LMG 16656 / NCTC 13227 / J2315 / CF5610)</name>
    <name type="common">Burkholderia cepacia (strain J2315)</name>
    <dbReference type="NCBI Taxonomy" id="216591"/>
    <lineage>
        <taxon>Bacteria</taxon>
        <taxon>Pseudomonadati</taxon>
        <taxon>Pseudomonadota</taxon>
        <taxon>Betaproteobacteria</taxon>
        <taxon>Burkholderiales</taxon>
        <taxon>Burkholderiaceae</taxon>
        <taxon>Burkholderia</taxon>
        <taxon>Burkholderia cepacia complex</taxon>
    </lineage>
</organism>
<proteinExistence type="inferred from homology"/>
<name>PQQA_BURCJ</name>
<comment type="function">
    <text evidence="1">Required for coenzyme pyrroloquinoline quinone (PQQ) biosynthesis. PQQ is probably formed by cross-linking a specific glutamate to a specific tyrosine residue and excising these residues from the peptide.</text>
</comment>
<comment type="pathway">
    <text evidence="1">Cofactor biosynthesis; pyrroloquinoline quinone biosynthesis.</text>
</comment>
<comment type="similarity">
    <text evidence="1">Belongs to the PqqA family.</text>
</comment>